<proteinExistence type="evidence at transcript level"/>
<comment type="function">
    <text>Transcription factor; binds and activates the promoter for the HNF1-alpha gene. Seems to have a lower DNA binding activity than HNF4-alpha and is a weaker transactivator than the alpha isoform.</text>
</comment>
<comment type="subunit">
    <text evidence="1">Homodimerization is required for HNF4-alpha to bind to its recognition site.</text>
</comment>
<comment type="subcellular location">
    <subcellularLocation>
        <location evidence="2">Nucleus</location>
    </subcellularLocation>
</comment>
<comment type="tissue specificity">
    <text>Expressed in liver, kidney, stomach, intestine, lung, ovary, and testis. Not expressed in fat, muscle and brain.</text>
</comment>
<comment type="developmental stage">
    <text>Maternal protein which is distributed within an animal-to-vegetal gradient in the embryo. Present from the egg stage onward and throughout the entire development.</text>
</comment>
<comment type="similarity">
    <text evidence="4">Belongs to the nuclear hormone receptor family. NR2 subfamily.</text>
</comment>
<sequence length="446" mass="50257">MDMPDYTETLDSSYTMLEFDSIRVLPSNTEIITVETASPGLLNNGINSFCAICGDRATGKHYGASSCDGCKGFFRRSVRKNHVYACRFSRQCIVDKDKRNQCRYCRLRKCFRAGMKKEAVQNERDRISMRRSSYEDNGSLSINVLTQAEAMVHQYSPVSPVHSSDISMKKVASISDVCESMKQQLLLLVEWAKYIPAFCELPLDDQVALLRAHAGAHLLLGVAKRSLPYKDFLLLGNDFIMPMHCPELEIARVPCRILDELVKPLREIQIDDNEYVCLKAIIFFDPDCKGLSDQTKVKNMRFQVQVNLEDYINDRQFDSRGRFSDILLLLPPLQSITWQMIEQVQFAKLFGVARIDSLLQELLLGGTTMDGGQYINSGHSSLNLDLLPGPTVHSHNLHSVIHTVSSLSPETSPPTNSTSEDYKMNTATVSSIPLMQRTVIAKKEIL</sequence>
<name>HNF4B_XENLA</name>
<reference key="1">
    <citation type="journal article" date="1997" name="Mol. Cell. Biol.">
        <title>HNF4beta, a new gene of the HNF4 family with distinct activation and expression profiles in oogenesis and embryogenesis of Xenopus laevis.</title>
        <authorList>
            <person name="Holewa B."/>
            <person name="Zapp D."/>
            <person name="Drewes T."/>
            <person name="Senkel S."/>
            <person name="Ryffel G.U."/>
        </authorList>
    </citation>
    <scope>NUCLEOTIDE SEQUENCE [MRNA]</scope>
    <source>
        <tissue>Liver</tissue>
    </source>
</reference>
<dbReference type="EMBL" id="Z49827">
    <property type="protein sequence ID" value="CAA89991.1"/>
    <property type="molecule type" value="mRNA"/>
</dbReference>
<dbReference type="SMR" id="P79926"/>
<dbReference type="AGR" id="Xenbase:XB-GENE-865553"/>
<dbReference type="Xenbase" id="XB-GENE-865553">
    <property type="gene designation" value="hnf4b.S"/>
</dbReference>
<dbReference type="Proteomes" id="UP000186698">
    <property type="component" value="Unplaced"/>
</dbReference>
<dbReference type="GO" id="GO:0005634">
    <property type="term" value="C:nucleus"/>
    <property type="evidence" value="ECO:0007669"/>
    <property type="project" value="UniProtKB-SubCell"/>
</dbReference>
<dbReference type="GO" id="GO:0004879">
    <property type="term" value="F:nuclear receptor activity"/>
    <property type="evidence" value="ECO:0000318"/>
    <property type="project" value="GO_Central"/>
</dbReference>
<dbReference type="GO" id="GO:0003707">
    <property type="term" value="F:nuclear steroid receptor activity"/>
    <property type="evidence" value="ECO:0007669"/>
    <property type="project" value="InterPro"/>
</dbReference>
<dbReference type="GO" id="GO:0000978">
    <property type="term" value="F:RNA polymerase II cis-regulatory region sequence-specific DNA binding"/>
    <property type="evidence" value="ECO:0000318"/>
    <property type="project" value="GO_Central"/>
</dbReference>
<dbReference type="GO" id="GO:0008270">
    <property type="term" value="F:zinc ion binding"/>
    <property type="evidence" value="ECO:0007669"/>
    <property type="project" value="UniProtKB-KW"/>
</dbReference>
<dbReference type="GO" id="GO:0030154">
    <property type="term" value="P:cell differentiation"/>
    <property type="evidence" value="ECO:0000318"/>
    <property type="project" value="GO_Central"/>
</dbReference>
<dbReference type="GO" id="GO:0045944">
    <property type="term" value="P:positive regulation of transcription by RNA polymerase II"/>
    <property type="evidence" value="ECO:0000318"/>
    <property type="project" value="GO_Central"/>
</dbReference>
<dbReference type="CDD" id="cd06960">
    <property type="entry name" value="NR_DBD_HNF4A"/>
    <property type="match status" value="1"/>
</dbReference>
<dbReference type="CDD" id="cd06931">
    <property type="entry name" value="NR_LBD_HNF4_like"/>
    <property type="match status" value="1"/>
</dbReference>
<dbReference type="FunFam" id="1.10.565.10:FF:000007">
    <property type="entry name" value="Hepatocyte nuclear factor 4 alpha"/>
    <property type="match status" value="1"/>
</dbReference>
<dbReference type="FunFam" id="3.30.50.10:FF:000012">
    <property type="entry name" value="Hepatocyte nuclear factor 4, alpha"/>
    <property type="match status" value="1"/>
</dbReference>
<dbReference type="Gene3D" id="3.30.50.10">
    <property type="entry name" value="Erythroid Transcription Factor GATA-1, subunit A"/>
    <property type="match status" value="1"/>
</dbReference>
<dbReference type="Gene3D" id="1.10.565.10">
    <property type="entry name" value="Retinoid X Receptor"/>
    <property type="match status" value="1"/>
</dbReference>
<dbReference type="InterPro" id="IPR049636">
    <property type="entry name" value="HNF4-like_DBD"/>
</dbReference>
<dbReference type="InterPro" id="IPR049635">
    <property type="entry name" value="HNF4_LBD"/>
</dbReference>
<dbReference type="InterPro" id="IPR035500">
    <property type="entry name" value="NHR-like_dom_sf"/>
</dbReference>
<dbReference type="InterPro" id="IPR000536">
    <property type="entry name" value="Nucl_hrmn_rcpt_lig-bd"/>
</dbReference>
<dbReference type="InterPro" id="IPR050274">
    <property type="entry name" value="Nuclear_hormone_rcpt_NR2"/>
</dbReference>
<dbReference type="InterPro" id="IPR001723">
    <property type="entry name" value="Nuclear_hrmn_rcpt"/>
</dbReference>
<dbReference type="InterPro" id="IPR000003">
    <property type="entry name" value="Retinoid-X_rcpt/HNF4"/>
</dbReference>
<dbReference type="InterPro" id="IPR001628">
    <property type="entry name" value="Znf_hrmn_rcpt"/>
</dbReference>
<dbReference type="InterPro" id="IPR013088">
    <property type="entry name" value="Znf_NHR/GATA"/>
</dbReference>
<dbReference type="PANTHER" id="PTHR24083">
    <property type="entry name" value="NUCLEAR HORMONE RECEPTOR"/>
    <property type="match status" value="1"/>
</dbReference>
<dbReference type="Pfam" id="PF00104">
    <property type="entry name" value="Hormone_recep"/>
    <property type="match status" value="1"/>
</dbReference>
<dbReference type="Pfam" id="PF00105">
    <property type="entry name" value="zf-C4"/>
    <property type="match status" value="1"/>
</dbReference>
<dbReference type="PRINTS" id="PR00545">
    <property type="entry name" value="RETINOIDXR"/>
</dbReference>
<dbReference type="PRINTS" id="PR00398">
    <property type="entry name" value="STRDHORMONER"/>
</dbReference>
<dbReference type="PRINTS" id="PR00047">
    <property type="entry name" value="STROIDFINGER"/>
</dbReference>
<dbReference type="SMART" id="SM00430">
    <property type="entry name" value="HOLI"/>
    <property type="match status" value="1"/>
</dbReference>
<dbReference type="SMART" id="SM00399">
    <property type="entry name" value="ZnF_C4"/>
    <property type="match status" value="1"/>
</dbReference>
<dbReference type="SUPFAM" id="SSF57716">
    <property type="entry name" value="Glucocorticoid receptor-like (DNA-binding domain)"/>
    <property type="match status" value="1"/>
</dbReference>
<dbReference type="SUPFAM" id="SSF48508">
    <property type="entry name" value="Nuclear receptor ligand-binding domain"/>
    <property type="match status" value="1"/>
</dbReference>
<dbReference type="PROSITE" id="PS51843">
    <property type="entry name" value="NR_LBD"/>
    <property type="match status" value="1"/>
</dbReference>
<dbReference type="PROSITE" id="PS00031">
    <property type="entry name" value="NUCLEAR_REC_DBD_1"/>
    <property type="match status" value="1"/>
</dbReference>
<dbReference type="PROSITE" id="PS51030">
    <property type="entry name" value="NUCLEAR_REC_DBD_2"/>
    <property type="match status" value="1"/>
</dbReference>
<feature type="chain" id="PRO_0000053564" description="Hepatocyte nuclear factor 4-beta">
    <location>
        <begin position="1"/>
        <end position="446"/>
    </location>
</feature>
<feature type="domain" description="NR LBD" evidence="3">
    <location>
        <begin position="137"/>
        <end position="366"/>
    </location>
</feature>
<feature type="DNA-binding region" description="Nuclear receptor" evidence="2">
    <location>
        <begin position="47"/>
        <end position="122"/>
    </location>
</feature>
<feature type="zinc finger region" description="NR C4-type" evidence="2">
    <location>
        <begin position="50"/>
        <end position="70"/>
    </location>
</feature>
<feature type="zinc finger region" description="NR C4-type" evidence="2">
    <location>
        <begin position="86"/>
        <end position="110"/>
    </location>
</feature>
<evidence type="ECO:0000250" key="1"/>
<evidence type="ECO:0000255" key="2">
    <source>
        <dbReference type="PROSITE-ProRule" id="PRU00407"/>
    </source>
</evidence>
<evidence type="ECO:0000255" key="3">
    <source>
        <dbReference type="PROSITE-ProRule" id="PRU01189"/>
    </source>
</evidence>
<evidence type="ECO:0000305" key="4"/>
<gene>
    <name type="primary">hnf4b</name>
    <name type="synonym">nr2a3</name>
</gene>
<accession>P79926</accession>
<organism>
    <name type="scientific">Xenopus laevis</name>
    <name type="common">African clawed frog</name>
    <dbReference type="NCBI Taxonomy" id="8355"/>
    <lineage>
        <taxon>Eukaryota</taxon>
        <taxon>Metazoa</taxon>
        <taxon>Chordata</taxon>
        <taxon>Craniata</taxon>
        <taxon>Vertebrata</taxon>
        <taxon>Euteleostomi</taxon>
        <taxon>Amphibia</taxon>
        <taxon>Batrachia</taxon>
        <taxon>Anura</taxon>
        <taxon>Pipoidea</taxon>
        <taxon>Pipidae</taxon>
        <taxon>Xenopodinae</taxon>
        <taxon>Xenopus</taxon>
        <taxon>Xenopus</taxon>
    </lineage>
</organism>
<protein>
    <recommendedName>
        <fullName>Hepatocyte nuclear factor 4-beta</fullName>
        <shortName>HNF-4-beta</shortName>
    </recommendedName>
    <alternativeName>
        <fullName>Nuclear receptor subfamily 2 group A member 3</fullName>
    </alternativeName>
</protein>
<keyword id="KW-0010">Activator</keyword>
<keyword id="KW-0238">DNA-binding</keyword>
<keyword id="KW-0479">Metal-binding</keyword>
<keyword id="KW-0539">Nucleus</keyword>
<keyword id="KW-0675">Receptor</keyword>
<keyword id="KW-1185">Reference proteome</keyword>
<keyword id="KW-0804">Transcription</keyword>
<keyword id="KW-0805">Transcription regulation</keyword>
<keyword id="KW-0862">Zinc</keyword>
<keyword id="KW-0863">Zinc-finger</keyword>